<reference key="1">
    <citation type="journal article" date="2007" name="Science">
        <title>Legumes symbioses: absence of nod genes in photosynthetic bradyrhizobia.</title>
        <authorList>
            <person name="Giraud E."/>
            <person name="Moulin L."/>
            <person name="Vallenet D."/>
            <person name="Barbe V."/>
            <person name="Cytryn E."/>
            <person name="Avarre J.-C."/>
            <person name="Jaubert M."/>
            <person name="Simon D."/>
            <person name="Cartieaux F."/>
            <person name="Prin Y."/>
            <person name="Bena G."/>
            <person name="Hannibal L."/>
            <person name="Fardoux J."/>
            <person name="Kojadinovic M."/>
            <person name="Vuillet L."/>
            <person name="Lajus A."/>
            <person name="Cruveiller S."/>
            <person name="Rouy Z."/>
            <person name="Mangenot S."/>
            <person name="Segurens B."/>
            <person name="Dossat C."/>
            <person name="Franck W.L."/>
            <person name="Chang W.-S."/>
            <person name="Saunders E."/>
            <person name="Bruce D."/>
            <person name="Richardson P."/>
            <person name="Normand P."/>
            <person name="Dreyfus B."/>
            <person name="Pignol D."/>
            <person name="Stacey G."/>
            <person name="Emerich D."/>
            <person name="Vermeglio A."/>
            <person name="Medigue C."/>
            <person name="Sadowsky M."/>
        </authorList>
    </citation>
    <scope>NUCLEOTIDE SEQUENCE [LARGE SCALE GENOMIC DNA]</scope>
    <source>
        <strain>BTAi1 / ATCC BAA-1182</strain>
    </source>
</reference>
<name>DABA2_BRASB</name>
<organism>
    <name type="scientific">Bradyrhizobium sp. (strain BTAi1 / ATCC BAA-1182)</name>
    <dbReference type="NCBI Taxonomy" id="288000"/>
    <lineage>
        <taxon>Bacteria</taxon>
        <taxon>Pseudomonadati</taxon>
        <taxon>Pseudomonadota</taxon>
        <taxon>Alphaproteobacteria</taxon>
        <taxon>Hyphomicrobiales</taxon>
        <taxon>Nitrobacteraceae</taxon>
        <taxon>Bradyrhizobium</taxon>
    </lineage>
</organism>
<keyword id="KW-0997">Cell inner membrane</keyword>
<keyword id="KW-1003">Cell membrane</keyword>
<keyword id="KW-0472">Membrane</keyword>
<keyword id="KW-0479">Metal-binding</keyword>
<keyword id="KW-1185">Reference proteome</keyword>
<keyword id="KW-0813">Transport</keyword>
<keyword id="KW-0862">Zinc</keyword>
<sequence>MIDREAPAAVLAPTPLLRHAIERACRRIAPVWPLKNFVAVNPFLGFSDRSFHATCAMLHRVARIDTLMPRAFYREAIRNGTIETADLAAALAAAPADWRLPTEAAELLKLADNDRIARKPPAVVATVAEVLNELAAGDRHVARTAFMTDEISRWCAAYFDEGQSVWRMPARGLRPYAAWRAWVRYDRNPEMMGIARFRALVADMPDDYVAAIATVIERLGIPARAVEDYLHQALLEIGGWAAYARYLMWNHELAGDRDDTLEQLLAIRVVWGYTLFAQRTDTAFREAWRRAMEQAALPPLDDQLGGDPDFCINMVLQEAYEIAFRRRLLDRLAGAPAARTAGARPAVQAAFCIDVRSEVYRRAMESVGDGVETVGFAGFFGFPIEFVPIGHVTGRAHCPVLLRPQFTVCEAVGGTSEEEDSEILVMRLLRRRVRKAWKSFKLSAVSSFIYVETAGLLFAGKILSDSLAVTRTVHDPNTDGLDDDLIGRLGPRIEPRPVGGRATGFDPAQRVAMAEAVLRAMSMTGPFARLVMLTGHGSTTVNNPHASGLDCGACGGHTGEANARVAAAILNDPDVRVALRQRGIDIPDDTVFLGCLHDTTTDVIRLFDIEQLPASHADDLRRLRALLAKATSLTRLERAALLGIARGAATEQQVVTRSRDWAQVRPEWGLAGNASFIAAPRARTRGIDLGGRSFLHDYDWQQDKDFGTLQLIMTAPMVVASWINLQYYGSTVNNAAFGAGNKVLHNVVGTLGVLEGNAGDLKVGLPWQSVHDGSRFVHEPLRLTVLIEAPLEAINGVIAKNDIVRELVDHHWLHLYAISPQGRVSHAYRGHLLWQQLEERSES</sequence>
<gene>
    <name evidence="1" type="primary">dabA2</name>
    <name type="ordered locus">BBta_2652</name>
</gene>
<accession>A5EF51</accession>
<evidence type="ECO:0000255" key="1">
    <source>
        <dbReference type="HAMAP-Rule" id="MF_01871"/>
    </source>
</evidence>
<feature type="chain" id="PRO_0000387251" description="Probable inorganic carbon transporter subunit DabA 2">
    <location>
        <begin position="1"/>
        <end position="843"/>
    </location>
</feature>
<feature type="binding site" evidence="1">
    <location>
        <position position="352"/>
    </location>
    <ligand>
        <name>Zn(2+)</name>
        <dbReference type="ChEBI" id="CHEBI:29105"/>
    </ligand>
</feature>
<feature type="binding site" evidence="1">
    <location>
        <position position="354"/>
    </location>
    <ligand>
        <name>Zn(2+)</name>
        <dbReference type="ChEBI" id="CHEBI:29105"/>
    </ligand>
</feature>
<feature type="binding site" evidence="1">
    <location>
        <position position="536"/>
    </location>
    <ligand>
        <name>Zn(2+)</name>
        <dbReference type="ChEBI" id="CHEBI:29105"/>
    </ligand>
</feature>
<feature type="binding site" evidence="1">
    <location>
        <position position="551"/>
    </location>
    <ligand>
        <name>Zn(2+)</name>
        <dbReference type="ChEBI" id="CHEBI:29105"/>
    </ligand>
</feature>
<protein>
    <recommendedName>
        <fullName evidence="1">Probable inorganic carbon transporter subunit DabA 2</fullName>
    </recommendedName>
</protein>
<proteinExistence type="inferred from homology"/>
<dbReference type="EMBL" id="CP000494">
    <property type="protein sequence ID" value="ABQ34795.1"/>
    <property type="molecule type" value="Genomic_DNA"/>
</dbReference>
<dbReference type="STRING" id="288000.BBta_2652"/>
<dbReference type="KEGG" id="bbt:BBta_2652"/>
<dbReference type="eggNOG" id="COG3002">
    <property type="taxonomic scope" value="Bacteria"/>
</dbReference>
<dbReference type="HOGENOM" id="CLU_009885_0_0_5"/>
<dbReference type="OrthoDB" id="9805101at2"/>
<dbReference type="Proteomes" id="UP000000246">
    <property type="component" value="Chromosome"/>
</dbReference>
<dbReference type="GO" id="GO:0005886">
    <property type="term" value="C:plasma membrane"/>
    <property type="evidence" value="ECO:0007669"/>
    <property type="project" value="UniProtKB-SubCell"/>
</dbReference>
<dbReference type="GO" id="GO:0008270">
    <property type="term" value="F:zinc ion binding"/>
    <property type="evidence" value="ECO:0007669"/>
    <property type="project" value="UniProtKB-UniRule"/>
</dbReference>
<dbReference type="HAMAP" id="MF_01871">
    <property type="entry name" value="DabA"/>
    <property type="match status" value="1"/>
</dbReference>
<dbReference type="InterPro" id="IPR018752">
    <property type="entry name" value="DabA"/>
</dbReference>
<dbReference type="PANTHER" id="PTHR38344:SF1">
    <property type="entry name" value="INORGANIC CARBON TRANSPORTER SUBUNIT DABA-RELATED"/>
    <property type="match status" value="1"/>
</dbReference>
<dbReference type="PANTHER" id="PTHR38344">
    <property type="entry name" value="UPF0753 PROTEIN AQ_863"/>
    <property type="match status" value="1"/>
</dbReference>
<dbReference type="Pfam" id="PF10070">
    <property type="entry name" value="DabA"/>
    <property type="match status" value="1"/>
</dbReference>
<comment type="function">
    <text evidence="1">Part of an energy-coupled inorganic carbon pump.</text>
</comment>
<comment type="cofactor">
    <cofactor evidence="1">
        <name>Zn(2+)</name>
        <dbReference type="ChEBI" id="CHEBI:29105"/>
    </cofactor>
</comment>
<comment type="subunit">
    <text evidence="1">Forms a complex with DabB.</text>
</comment>
<comment type="subcellular location">
    <subcellularLocation>
        <location evidence="1">Cell inner membrane</location>
        <topology evidence="1">Peripheral membrane protein</topology>
    </subcellularLocation>
</comment>
<comment type="similarity">
    <text evidence="1">Belongs to the inorganic carbon transporter (TC 9.A.2) DabA family.</text>
</comment>